<keyword id="KW-0106">Calcium</keyword>
<keyword id="KW-0255">Endonuclease</keyword>
<keyword id="KW-0378">Hydrolase</keyword>
<keyword id="KW-0479">Metal-binding</keyword>
<keyword id="KW-0540">Nuclease</keyword>
<keyword id="KW-0964">Secreted</keyword>
<keyword id="KW-0732">Signal</keyword>
<keyword id="KW-0865">Zymogen</keyword>
<comment type="function">
    <text evidence="1">Enzyme that catalyzes the hydrolysis of both DNA and RNA at the 5' position of the phosphodiester bond.</text>
</comment>
<comment type="catalytic activity">
    <reaction evidence="4 5">
        <text>Endonucleolytic cleavage to nucleoside 3'-phosphates and 3'-phosphooligonucleotide end-products.</text>
        <dbReference type="EC" id="3.1.31.1"/>
    </reaction>
</comment>
<comment type="cofactor">
    <cofactor evidence="1">
        <name>Ca(2+)</name>
        <dbReference type="ChEBI" id="CHEBI:29108"/>
    </cofactor>
    <text evidence="1">Binds 1 Ca(2+) ion per subunit.</text>
</comment>
<comment type="subcellular location">
    <subcellularLocation>
        <location evidence="1">Secreted</location>
    </subcellularLocation>
</comment>
<comment type="similarity">
    <text evidence="3">Belongs to the thermonuclease family.</text>
</comment>
<accession>Q6GIK1</accession>
<dbReference type="EC" id="3.1.31.1"/>
<dbReference type="EMBL" id="BX571856">
    <property type="protein sequence ID" value="CAG39855.1"/>
    <property type="molecule type" value="Genomic_DNA"/>
</dbReference>
<dbReference type="RefSeq" id="WP_001643461.1">
    <property type="nucleotide sequence ID" value="NC_002952.2"/>
</dbReference>
<dbReference type="BMRB" id="Q6GIK1"/>
<dbReference type="SMR" id="Q6GIK1"/>
<dbReference type="KEGG" id="sar:SAR0847"/>
<dbReference type="HOGENOM" id="CLU_046484_5_2_9"/>
<dbReference type="Proteomes" id="UP000000596">
    <property type="component" value="Chromosome"/>
</dbReference>
<dbReference type="GO" id="GO:0005576">
    <property type="term" value="C:extracellular region"/>
    <property type="evidence" value="ECO:0007669"/>
    <property type="project" value="UniProtKB-SubCell"/>
</dbReference>
<dbReference type="GO" id="GO:0016894">
    <property type="term" value="F:endonuclease activity, active with either ribo- or deoxyribonucleic acids and producing 3'-phosphomonoesters"/>
    <property type="evidence" value="ECO:0007669"/>
    <property type="project" value="UniProtKB-EC"/>
</dbReference>
<dbReference type="GO" id="GO:0046872">
    <property type="term" value="F:metal ion binding"/>
    <property type="evidence" value="ECO:0007669"/>
    <property type="project" value="UniProtKB-KW"/>
</dbReference>
<dbReference type="GO" id="GO:0003676">
    <property type="term" value="F:nucleic acid binding"/>
    <property type="evidence" value="ECO:0007669"/>
    <property type="project" value="InterPro"/>
</dbReference>
<dbReference type="CDD" id="cd00175">
    <property type="entry name" value="SNc"/>
    <property type="match status" value="1"/>
</dbReference>
<dbReference type="FunFam" id="2.40.50.90:FF:000025">
    <property type="entry name" value="Thermonuclease"/>
    <property type="match status" value="1"/>
</dbReference>
<dbReference type="Gene3D" id="2.40.50.90">
    <property type="match status" value="1"/>
</dbReference>
<dbReference type="InterPro" id="IPR035437">
    <property type="entry name" value="SNase_OB-fold_sf"/>
</dbReference>
<dbReference type="InterPro" id="IPR016071">
    <property type="entry name" value="Staphylococal_nuclease_OB-fold"/>
</dbReference>
<dbReference type="InterPro" id="IPR002071">
    <property type="entry name" value="Thermonucl_AS"/>
</dbReference>
<dbReference type="PANTHER" id="PTHR12302">
    <property type="entry name" value="EBNA2 BINDING PROTEIN P100"/>
    <property type="match status" value="1"/>
</dbReference>
<dbReference type="PANTHER" id="PTHR12302:SF3">
    <property type="entry name" value="SERINE_THREONINE-PROTEIN KINASE 31"/>
    <property type="match status" value="1"/>
</dbReference>
<dbReference type="Pfam" id="PF00565">
    <property type="entry name" value="SNase"/>
    <property type="match status" value="1"/>
</dbReference>
<dbReference type="SMART" id="SM00318">
    <property type="entry name" value="SNc"/>
    <property type="match status" value="1"/>
</dbReference>
<dbReference type="SUPFAM" id="SSF50199">
    <property type="entry name" value="Staphylococcal nuclease"/>
    <property type="match status" value="1"/>
</dbReference>
<dbReference type="PROSITE" id="PS01123">
    <property type="entry name" value="TNASE_1"/>
    <property type="match status" value="1"/>
</dbReference>
<dbReference type="PROSITE" id="PS01284">
    <property type="entry name" value="TNASE_2"/>
    <property type="match status" value="1"/>
</dbReference>
<dbReference type="PROSITE" id="PS50830">
    <property type="entry name" value="TNASE_3"/>
    <property type="match status" value="1"/>
</dbReference>
<reference key="1">
    <citation type="journal article" date="2004" name="Proc. Natl. Acad. Sci. U.S.A.">
        <title>Complete genomes of two clinical Staphylococcus aureus strains: evidence for the rapid evolution of virulence and drug resistance.</title>
        <authorList>
            <person name="Holden M.T.G."/>
            <person name="Feil E.J."/>
            <person name="Lindsay J.A."/>
            <person name="Peacock S.J."/>
            <person name="Day N.P.J."/>
            <person name="Enright M.C."/>
            <person name="Foster T.J."/>
            <person name="Moore C.E."/>
            <person name="Hurst L."/>
            <person name="Atkin R."/>
            <person name="Barron A."/>
            <person name="Bason N."/>
            <person name="Bentley S.D."/>
            <person name="Chillingworth C."/>
            <person name="Chillingworth T."/>
            <person name="Churcher C."/>
            <person name="Clark L."/>
            <person name="Corton C."/>
            <person name="Cronin A."/>
            <person name="Doggett J."/>
            <person name="Dowd L."/>
            <person name="Feltwell T."/>
            <person name="Hance Z."/>
            <person name="Harris B."/>
            <person name="Hauser H."/>
            <person name="Holroyd S."/>
            <person name="Jagels K."/>
            <person name="James K.D."/>
            <person name="Lennard N."/>
            <person name="Line A."/>
            <person name="Mayes R."/>
            <person name="Moule S."/>
            <person name="Mungall K."/>
            <person name="Ormond D."/>
            <person name="Quail M.A."/>
            <person name="Rabbinowitsch E."/>
            <person name="Rutherford K.M."/>
            <person name="Sanders M."/>
            <person name="Sharp S."/>
            <person name="Simmonds M."/>
            <person name="Stevens K."/>
            <person name="Whitehead S."/>
            <person name="Barrell B.G."/>
            <person name="Spratt B.G."/>
            <person name="Parkhill J."/>
        </authorList>
    </citation>
    <scope>NUCLEOTIDE SEQUENCE [LARGE SCALE GENOMIC DNA]</scope>
    <source>
        <strain>MRSA252</strain>
    </source>
</reference>
<gene>
    <name type="primary">nuc</name>
    <name type="ordered locus">SAR0847</name>
</gene>
<name>NUC_STAAR</name>
<sequence>MTEYLLSAGICMAIVSILLIGMAISNVSKEQYAKRFFFFATSCLVLTLVVASSLSSSANASQTDNGVNRSGSEYPTVYSATSTKKLHKEPATLIKAIDGDTVKLMYKGQPMTFRLLLVDTPETKHPKKGVEKYGPEASAFTKKMVENAKKIEVEFDKGQRTDKYGRGLAYIYADGKMVNEALVRQGLAKVAYVYKPNNTHEQLLRKSEAQAKKEKLNIWSEDNADSGQ</sequence>
<proteinExistence type="inferred from homology"/>
<evidence type="ECO:0000250" key="1"/>
<evidence type="ECO:0000255" key="2"/>
<evidence type="ECO:0000255" key="3">
    <source>
        <dbReference type="PROSITE-ProRule" id="PRU00272"/>
    </source>
</evidence>
<evidence type="ECO:0000255" key="4">
    <source>
        <dbReference type="PROSITE-ProRule" id="PRU10048"/>
    </source>
</evidence>
<evidence type="ECO:0000255" key="5">
    <source>
        <dbReference type="PROSITE-ProRule" id="PRU10049"/>
    </source>
</evidence>
<organism>
    <name type="scientific">Staphylococcus aureus (strain MRSA252)</name>
    <dbReference type="NCBI Taxonomy" id="282458"/>
    <lineage>
        <taxon>Bacteria</taxon>
        <taxon>Bacillati</taxon>
        <taxon>Bacillota</taxon>
        <taxon>Bacilli</taxon>
        <taxon>Bacillales</taxon>
        <taxon>Staphylococcaceae</taxon>
        <taxon>Staphylococcus</taxon>
    </lineage>
</organism>
<protein>
    <recommendedName>
        <fullName>Thermonuclease</fullName>
        <shortName>TNase</shortName>
        <ecNumber>3.1.31.1</ecNumber>
    </recommendedName>
    <alternativeName>
        <fullName>Micrococcal nuclease</fullName>
    </alternativeName>
    <alternativeName>
        <fullName>Staphylococcal nuclease</fullName>
    </alternativeName>
</protein>
<feature type="signal peptide" evidence="2">
    <location>
        <begin position="1"/>
        <end position="23"/>
    </location>
</feature>
<feature type="propeptide" id="PRO_0000045233" evidence="1">
    <location>
        <begin position="24"/>
        <end position="60"/>
    </location>
</feature>
<feature type="chain" id="PRO_0000045234" description="Thermonuclease">
    <location>
        <begin position="61"/>
        <end position="228"/>
    </location>
</feature>
<feature type="active site" evidence="1">
    <location>
        <position position="114"/>
    </location>
</feature>
<feature type="active site" evidence="1">
    <location>
        <position position="122"/>
    </location>
</feature>
<feature type="active site" evidence="1">
    <location>
        <position position="166"/>
    </location>
</feature>
<feature type="binding site" evidence="3">
    <location>
        <position position="100"/>
    </location>
    <ligand>
        <name>Ca(2+)</name>
        <dbReference type="ChEBI" id="CHEBI:29108"/>
    </ligand>
</feature>
<feature type="binding site" evidence="3">
    <location>
        <position position="119"/>
    </location>
    <ligand>
        <name>Ca(2+)</name>
        <dbReference type="ChEBI" id="CHEBI:29108"/>
    </ligand>
</feature>
<feature type="binding site" evidence="3">
    <location>
        <position position="120"/>
    </location>
    <ligand>
        <name>Ca(2+)</name>
        <dbReference type="ChEBI" id="CHEBI:29108"/>
    </ligand>
</feature>